<accession>C3MU48</accession>
<dbReference type="EC" id="2.1.2.11" evidence="1"/>
<dbReference type="EMBL" id="CP001400">
    <property type="protein sequence ID" value="ACP37082.1"/>
    <property type="molecule type" value="Genomic_DNA"/>
</dbReference>
<dbReference type="RefSeq" id="WP_012710369.1">
    <property type="nucleotide sequence ID" value="NC_012588.1"/>
</dbReference>
<dbReference type="SMR" id="C3MU48"/>
<dbReference type="GeneID" id="84060682"/>
<dbReference type="KEGG" id="sia:M1425_0191"/>
<dbReference type="HOGENOM" id="CLU_036645_1_0_2"/>
<dbReference type="UniPathway" id="UPA00241"/>
<dbReference type="Proteomes" id="UP000001350">
    <property type="component" value="Chromosome"/>
</dbReference>
<dbReference type="GO" id="GO:0005737">
    <property type="term" value="C:cytoplasm"/>
    <property type="evidence" value="ECO:0007669"/>
    <property type="project" value="UniProtKB-SubCell"/>
</dbReference>
<dbReference type="GO" id="GO:0003864">
    <property type="term" value="F:3-methyl-2-oxobutanoate hydroxymethyltransferase activity"/>
    <property type="evidence" value="ECO:0007669"/>
    <property type="project" value="UniProtKB-UniRule"/>
</dbReference>
<dbReference type="GO" id="GO:0000287">
    <property type="term" value="F:magnesium ion binding"/>
    <property type="evidence" value="ECO:0007669"/>
    <property type="project" value="TreeGrafter"/>
</dbReference>
<dbReference type="GO" id="GO:0015937">
    <property type="term" value="P:coenzyme A biosynthetic process"/>
    <property type="evidence" value="ECO:0007669"/>
    <property type="project" value="UniProtKB-UniRule"/>
</dbReference>
<dbReference type="GO" id="GO:0015940">
    <property type="term" value="P:pantothenate biosynthetic process"/>
    <property type="evidence" value="ECO:0007669"/>
    <property type="project" value="InterPro"/>
</dbReference>
<dbReference type="CDD" id="cd06557">
    <property type="entry name" value="KPHMT-like"/>
    <property type="match status" value="1"/>
</dbReference>
<dbReference type="FunFam" id="3.20.20.60:FF:000052">
    <property type="entry name" value="3-methyl-2-oxobutanoate hydroxymethyltransferase"/>
    <property type="match status" value="1"/>
</dbReference>
<dbReference type="Gene3D" id="3.20.20.60">
    <property type="entry name" value="Phosphoenolpyruvate-binding domains"/>
    <property type="match status" value="1"/>
</dbReference>
<dbReference type="HAMAP" id="MF_00156">
    <property type="entry name" value="PanB"/>
    <property type="match status" value="1"/>
</dbReference>
<dbReference type="InterPro" id="IPR003700">
    <property type="entry name" value="Pantoate_hydroxy_MeTrfase"/>
</dbReference>
<dbReference type="InterPro" id="IPR015813">
    <property type="entry name" value="Pyrv/PenolPyrv_kinase-like_dom"/>
</dbReference>
<dbReference type="InterPro" id="IPR040442">
    <property type="entry name" value="Pyrv_kinase-like_dom_sf"/>
</dbReference>
<dbReference type="NCBIfam" id="TIGR00222">
    <property type="entry name" value="panB"/>
    <property type="match status" value="1"/>
</dbReference>
<dbReference type="NCBIfam" id="NF001452">
    <property type="entry name" value="PRK00311.1"/>
    <property type="match status" value="1"/>
</dbReference>
<dbReference type="PANTHER" id="PTHR20881">
    <property type="entry name" value="3-METHYL-2-OXOBUTANOATE HYDROXYMETHYLTRANSFERASE"/>
    <property type="match status" value="1"/>
</dbReference>
<dbReference type="PANTHER" id="PTHR20881:SF0">
    <property type="entry name" value="3-METHYL-2-OXOBUTANOATE HYDROXYMETHYLTRANSFERASE"/>
    <property type="match status" value="1"/>
</dbReference>
<dbReference type="Pfam" id="PF02548">
    <property type="entry name" value="Pantoate_transf"/>
    <property type="match status" value="1"/>
</dbReference>
<dbReference type="PIRSF" id="PIRSF000388">
    <property type="entry name" value="Pantoate_hydroxy_MeTrfase"/>
    <property type="match status" value="1"/>
</dbReference>
<dbReference type="SUPFAM" id="SSF51621">
    <property type="entry name" value="Phosphoenolpyruvate/pyruvate domain"/>
    <property type="match status" value="1"/>
</dbReference>
<organism>
    <name type="scientific">Saccharolobus islandicus (strain M.14.25 / Kamchatka #1)</name>
    <name type="common">Sulfolobus islandicus</name>
    <dbReference type="NCBI Taxonomy" id="427317"/>
    <lineage>
        <taxon>Archaea</taxon>
        <taxon>Thermoproteota</taxon>
        <taxon>Thermoprotei</taxon>
        <taxon>Sulfolobales</taxon>
        <taxon>Sulfolobaceae</taxon>
        <taxon>Saccharolobus</taxon>
    </lineage>
</organism>
<reference key="1">
    <citation type="journal article" date="2009" name="Proc. Natl. Acad. Sci. U.S.A.">
        <title>Biogeography of the Sulfolobus islandicus pan-genome.</title>
        <authorList>
            <person name="Reno M.L."/>
            <person name="Held N.L."/>
            <person name="Fields C.J."/>
            <person name="Burke P.V."/>
            <person name="Whitaker R.J."/>
        </authorList>
    </citation>
    <scope>NUCLEOTIDE SEQUENCE [LARGE SCALE GENOMIC DNA]</scope>
    <source>
        <strain>M.14.25 / Kamchatka #1</strain>
    </source>
</reference>
<sequence>MKKVTIRDFIKKKSTKEKITILTAYDYPTAKIISNTGLDSILVGDSLGMVVLGYANTLNVTMRDMISHTRAVARANPPQLIVADMPFLSYEIDTKSAVKNAGLLVKAGSDAIKLEGGEEMKDTVKAIVKAGIPVMGHIGLTPQRFLRLGGFRTIGKTKQEEDQLIKDSLELEDAGVFSLVIENTYVDIAKRITEKLNIPTICIGAGPYCDGQVLVINDLLGLSEFTPYFAKSYVNLKEIISNAINQYIIDVKNNKFPEKQHYKEKES</sequence>
<evidence type="ECO:0000255" key="1">
    <source>
        <dbReference type="HAMAP-Rule" id="MF_00156"/>
    </source>
</evidence>
<comment type="function">
    <text evidence="1">Catalyzes the reversible reaction in which hydroxymethyl group from 5,10-methylenetetrahydrofolate is transferred onto alpha-ketoisovalerate to form ketopantoate.</text>
</comment>
<comment type="catalytic activity">
    <reaction evidence="1">
        <text>3-methyl-2-oxobutanoate + (6R)-5,10-methylene-5,6,7,8-tetrahydrofolate + H2O = 2-dehydropantoate + (6S)-5,6,7,8-tetrahydrofolate</text>
        <dbReference type="Rhea" id="RHEA:11824"/>
        <dbReference type="ChEBI" id="CHEBI:11561"/>
        <dbReference type="ChEBI" id="CHEBI:11851"/>
        <dbReference type="ChEBI" id="CHEBI:15377"/>
        <dbReference type="ChEBI" id="CHEBI:15636"/>
        <dbReference type="ChEBI" id="CHEBI:57453"/>
        <dbReference type="EC" id="2.1.2.11"/>
    </reaction>
</comment>
<comment type="cofactor">
    <cofactor evidence="1">
        <name>Mg(2+)</name>
        <dbReference type="ChEBI" id="CHEBI:18420"/>
    </cofactor>
    <text evidence="1">Binds 1 Mg(2+) ion per subunit.</text>
</comment>
<comment type="pathway">
    <text evidence="1">Cofactor biosynthesis; coenzyme A biosynthesis.</text>
</comment>
<comment type="subunit">
    <text evidence="1">Homodecamer; pentamer of dimers.</text>
</comment>
<comment type="subcellular location">
    <subcellularLocation>
        <location evidence="1">Cytoplasm</location>
    </subcellularLocation>
</comment>
<comment type="similarity">
    <text evidence="1">Belongs to the PanB family.</text>
</comment>
<feature type="chain" id="PRO_1000203480" description="3-methyl-2-oxobutanoate hydroxymethyltransferase">
    <location>
        <begin position="1"/>
        <end position="267"/>
    </location>
</feature>
<feature type="active site" description="Proton acceptor" evidence="1">
    <location>
        <position position="182"/>
    </location>
</feature>
<feature type="binding site" evidence="1">
    <location>
        <begin position="45"/>
        <end position="46"/>
    </location>
    <ligand>
        <name>3-methyl-2-oxobutanoate</name>
        <dbReference type="ChEBI" id="CHEBI:11851"/>
    </ligand>
</feature>
<feature type="binding site" evidence="1">
    <location>
        <position position="45"/>
    </location>
    <ligand>
        <name>Mg(2+)</name>
        <dbReference type="ChEBI" id="CHEBI:18420"/>
    </ligand>
</feature>
<feature type="binding site" evidence="1">
    <location>
        <position position="84"/>
    </location>
    <ligand>
        <name>3-methyl-2-oxobutanoate</name>
        <dbReference type="ChEBI" id="CHEBI:11851"/>
    </ligand>
</feature>
<feature type="binding site" evidence="1">
    <location>
        <position position="84"/>
    </location>
    <ligand>
        <name>Mg(2+)</name>
        <dbReference type="ChEBI" id="CHEBI:18420"/>
    </ligand>
</feature>
<feature type="binding site" evidence="1">
    <location>
        <position position="113"/>
    </location>
    <ligand>
        <name>3-methyl-2-oxobutanoate</name>
        <dbReference type="ChEBI" id="CHEBI:11851"/>
    </ligand>
</feature>
<feature type="binding site" evidence="1">
    <location>
        <position position="115"/>
    </location>
    <ligand>
        <name>Mg(2+)</name>
        <dbReference type="ChEBI" id="CHEBI:18420"/>
    </ligand>
</feature>
<protein>
    <recommendedName>
        <fullName evidence="1">3-methyl-2-oxobutanoate hydroxymethyltransferase</fullName>
        <ecNumber evidence="1">2.1.2.11</ecNumber>
    </recommendedName>
    <alternativeName>
        <fullName evidence="1">Ketopantoate hydroxymethyltransferase</fullName>
        <shortName evidence="1">KPHMT</shortName>
    </alternativeName>
</protein>
<gene>
    <name evidence="1" type="primary">panB</name>
    <name type="ordered locus">M1425_0191</name>
</gene>
<name>PANB_SACI4</name>
<proteinExistence type="inferred from homology"/>
<keyword id="KW-0173">Coenzyme A biosynthesis</keyword>
<keyword id="KW-0963">Cytoplasm</keyword>
<keyword id="KW-0460">Magnesium</keyword>
<keyword id="KW-0479">Metal-binding</keyword>
<keyword id="KW-0808">Transferase</keyword>